<dbReference type="EC" id="1.5.1.21" evidence="1"/>
<dbReference type="EC" id="1.4.1.17" evidence="1"/>
<dbReference type="EMBL" id="DQ017704">
    <property type="protein sequence ID" value="AAY43734.1"/>
    <property type="molecule type" value="Genomic_DNA"/>
</dbReference>
<dbReference type="EMBL" id="KN265567">
    <property type="protein sequence ID" value="KGK93380.1"/>
    <property type="molecule type" value="Genomic_DNA"/>
</dbReference>
<dbReference type="RefSeq" id="WP_007246364.1">
    <property type="nucleotide sequence ID" value="NZ_SNVG01000050.1"/>
</dbReference>
<dbReference type="PDB" id="1WTJ">
    <property type="method" value="X-ray"/>
    <property type="resolution" value="1.55 A"/>
    <property type="chains" value="A/B=1-343"/>
</dbReference>
<dbReference type="PDB" id="2CWF">
    <property type="method" value="X-ray"/>
    <property type="resolution" value="1.80 A"/>
    <property type="chains" value="A/B=1-343"/>
</dbReference>
<dbReference type="PDB" id="2CWH">
    <property type="method" value="X-ray"/>
    <property type="resolution" value="1.70 A"/>
    <property type="chains" value="A/B=1-343"/>
</dbReference>
<dbReference type="PDBsum" id="1WTJ"/>
<dbReference type="PDBsum" id="2CWF"/>
<dbReference type="PDBsum" id="2CWH"/>
<dbReference type="SMR" id="Q4U331"/>
<dbReference type="HOGENOM" id="CLU_040452_0_0_6"/>
<dbReference type="BRENDA" id="1.5.1.1">
    <property type="organism ID" value="5193"/>
</dbReference>
<dbReference type="BRENDA" id="1.5.1.21">
    <property type="organism ID" value="5193"/>
</dbReference>
<dbReference type="EvolutionaryTrace" id="Q4U331"/>
<dbReference type="GO" id="GO:0047125">
    <property type="term" value="F:delta1-piperideine-2-carboxylate reductase activity"/>
    <property type="evidence" value="ECO:0000314"/>
    <property type="project" value="UniProtKB"/>
</dbReference>
<dbReference type="GO" id="GO:0042802">
    <property type="term" value="F:identical protein binding"/>
    <property type="evidence" value="ECO:0000314"/>
    <property type="project" value="UniProtKB"/>
</dbReference>
<dbReference type="GO" id="GO:0050132">
    <property type="term" value="F:N-methylalanine dehydrogenase activity"/>
    <property type="evidence" value="ECO:0007669"/>
    <property type="project" value="UniProtKB-EC"/>
</dbReference>
<dbReference type="GO" id="GO:0070401">
    <property type="term" value="F:NADP+ binding"/>
    <property type="evidence" value="ECO:0000314"/>
    <property type="project" value="UniProtKB"/>
</dbReference>
<dbReference type="GO" id="GO:0042803">
    <property type="term" value="F:protein homodimerization activity"/>
    <property type="evidence" value="ECO:0000314"/>
    <property type="project" value="UniProtKB"/>
</dbReference>
<dbReference type="GO" id="GO:0050241">
    <property type="term" value="F:pyrroline-2-carboxylate reductase activity"/>
    <property type="evidence" value="ECO:0000314"/>
    <property type="project" value="UniProtKB"/>
</dbReference>
<dbReference type="GO" id="GO:0030416">
    <property type="term" value="P:methylamine metabolic process"/>
    <property type="evidence" value="ECO:0000314"/>
    <property type="project" value="UniProtKB"/>
</dbReference>
<dbReference type="GO" id="GO:0006560">
    <property type="term" value="P:proline metabolic process"/>
    <property type="evidence" value="ECO:0000314"/>
    <property type="project" value="UniProtKB"/>
</dbReference>
<dbReference type="FunFam" id="3.30.1370.60:FF:000002">
    <property type="entry name" value="Malate/L-lactate family dehydrogenase"/>
    <property type="match status" value="1"/>
</dbReference>
<dbReference type="Gene3D" id="1.10.1530.10">
    <property type="match status" value="1"/>
</dbReference>
<dbReference type="Gene3D" id="3.30.1370.60">
    <property type="entry name" value="Hypothetical oxidoreductase yiak, domain 2"/>
    <property type="match status" value="1"/>
</dbReference>
<dbReference type="InterPro" id="IPR043144">
    <property type="entry name" value="Mal/L-sulf/L-lact_DH-like_ah"/>
</dbReference>
<dbReference type="InterPro" id="IPR043143">
    <property type="entry name" value="Mal/L-sulf/L-lact_DH-like_NADP"/>
</dbReference>
<dbReference type="InterPro" id="IPR036111">
    <property type="entry name" value="Mal/L-sulfo/L-lacto_DH-like_sf"/>
</dbReference>
<dbReference type="InterPro" id="IPR003767">
    <property type="entry name" value="Malate/L-lactate_DH-like"/>
</dbReference>
<dbReference type="PANTHER" id="PTHR11091:SF0">
    <property type="entry name" value="MALATE DEHYDROGENASE"/>
    <property type="match status" value="1"/>
</dbReference>
<dbReference type="PANTHER" id="PTHR11091">
    <property type="entry name" value="OXIDOREDUCTASE-RELATED"/>
    <property type="match status" value="1"/>
</dbReference>
<dbReference type="Pfam" id="PF02615">
    <property type="entry name" value="Ldh_2"/>
    <property type="match status" value="1"/>
</dbReference>
<dbReference type="SUPFAM" id="SSF89733">
    <property type="entry name" value="L-sulfolactate dehydrogenase-like"/>
    <property type="match status" value="1"/>
</dbReference>
<protein>
    <recommendedName>
        <fullName evidence="2">Delta(1)-pyrroline-2-carboxylate/Delta(1)-piperideine-2-carboxylate reductase</fullName>
        <shortName evidence="2">Pyr2C/Pip2C reductase</shortName>
        <ecNumber evidence="1">1.5.1.21</ecNumber>
    </recommendedName>
    <alternativeName>
        <fullName evidence="2">N-methyl-L-amino acid dehydrogenase</fullName>
        <ecNumber evidence="1">1.4.1.17</ecNumber>
    </alternativeName>
</protein>
<accession>Q4U331</accession>
<reference key="1">
    <citation type="journal article" date="2005" name="J. Biol. Chem.">
        <title>Crystal structures of Delta1-piperideine-2-carboxylate/Delta1-pyrroline-2-carboxylate reductase belonging to a new family of NAD(P)H-dependent oxidoreductases: conformational change, substrate recognition, and stereochemistry of the reaction.</title>
        <authorList>
            <person name="Goto M."/>
            <person name="Muramatsu H."/>
            <person name="Mihara H."/>
            <person name="Kurihara T."/>
            <person name="Esaki N."/>
            <person name="Omi R."/>
            <person name="Miyahara I."/>
            <person name="Hirotsu K."/>
        </authorList>
    </citation>
    <scope>NUCLEOTIDE SEQUENCE [GENOMIC DNA]</scope>
    <scope>X-RAY CRYSTALLOGRAPHY (1.55 ANGSTROMS) OF APOENZYME AND IN COMPLEXES WITH NADPH AND PYRROLE-2-CARBOXYLATE INHIBITOR</scope>
    <scope>FUNCTION</scope>
    <scope>CATALYTIC ACTIVITY</scope>
    <scope>BIOPHYSICOCHEMICAL PROPERTIES</scope>
    <scope>SUBSTRATE SPECIFICITY</scope>
    <scope>ACTIVITY REGULATION</scope>
    <scope>SUBUNIT</scope>
    <scope>REACTION MECHANISM</scope>
    <scope>ACTIVE SITE</scope>
    <source>
        <strain>DSM 50315</strain>
    </source>
</reference>
<reference key="2">
    <citation type="submission" date="2014-10" db="EMBL/GenBank/DDBJ databases">
        <title>Genome-assisted development of a diagnostic protocol for distinguishing high virulence Pseudomonas syringae pv. tomato strains.</title>
        <authorList>
            <person name="Jones L.A."/>
            <person name="Saha S."/>
            <person name="Collmer A."/>
            <person name="Smart C.D."/>
            <person name="Lindeberg M."/>
        </authorList>
    </citation>
    <scope>NUCLEOTIDE SEQUENCE [LARGE SCALE GENOMIC DNA]</scope>
    <source>
        <strain>NYS-T1</strain>
    </source>
</reference>
<feature type="chain" id="PRO_0000432289" description="Delta(1)-pyrroline-2-carboxylate/Delta(1)-piperideine-2-carboxylate reductase">
    <location>
        <begin position="1"/>
        <end position="343"/>
    </location>
</feature>
<feature type="active site" description="Charge relay system" evidence="4">
    <location>
        <position position="53"/>
    </location>
</feature>
<feature type="active site" description="Proton donor" evidence="4">
    <location>
        <position position="54"/>
    </location>
</feature>
<feature type="active site" description="Charge relay system" evidence="4">
    <location>
        <position position="194"/>
    </location>
</feature>
<feature type="binding site" evidence="4">
    <location>
        <position position="58"/>
    </location>
    <ligand>
        <name>substrate</name>
    </ligand>
</feature>
<feature type="binding site" description="in other chain" evidence="1 6 7">
    <location>
        <begin position="126"/>
        <end position="130"/>
    </location>
    <ligand>
        <name>NADP(+)</name>
        <dbReference type="ChEBI" id="CHEBI:58349"/>
        <note>ligand shared between dimeric partners</note>
    </ligand>
</feature>
<feature type="binding site" evidence="4">
    <location>
        <position position="166"/>
    </location>
    <ligand>
        <name>substrate</name>
    </ligand>
</feature>
<feature type="binding site" description="in other chain" evidence="1 6 7">
    <location>
        <begin position="184"/>
        <end position="186"/>
    </location>
    <ligand>
        <name>NADP(+)</name>
        <dbReference type="ChEBI" id="CHEBI:58349"/>
        <note>ligand shared between dimeric partners</note>
    </ligand>
</feature>
<feature type="binding site" evidence="4">
    <location>
        <begin position="192"/>
        <end position="193"/>
    </location>
    <ligand>
        <name>substrate</name>
    </ligand>
</feature>
<feature type="binding site" evidence="1 6 7">
    <location>
        <begin position="236"/>
        <end position="237"/>
    </location>
    <ligand>
        <name>NADP(+)</name>
        <dbReference type="ChEBI" id="CHEBI:58349"/>
        <note>ligand shared between dimeric partners</note>
    </ligand>
</feature>
<feature type="binding site" description="in other chain" evidence="1 6 7">
    <location>
        <begin position="309"/>
        <end position="315"/>
    </location>
    <ligand>
        <name>NADP(+)</name>
        <dbReference type="ChEBI" id="CHEBI:58349"/>
        <note>ligand shared between dimeric partners</note>
    </ligand>
</feature>
<feature type="strand" evidence="8">
    <location>
        <begin position="11"/>
        <end position="13"/>
    </location>
</feature>
<feature type="helix" evidence="8">
    <location>
        <begin position="15"/>
        <end position="28"/>
    </location>
</feature>
<feature type="helix" evidence="8">
    <location>
        <begin position="33"/>
        <end position="48"/>
    </location>
</feature>
<feature type="helix" evidence="8">
    <location>
        <begin position="52"/>
        <end position="54"/>
    </location>
</feature>
<feature type="helix" evidence="8">
    <location>
        <begin position="56"/>
        <end position="58"/>
    </location>
</feature>
<feature type="helix" evidence="8">
    <location>
        <begin position="59"/>
        <end position="67"/>
    </location>
</feature>
<feature type="strand" evidence="8">
    <location>
        <begin position="78"/>
        <end position="83"/>
    </location>
</feature>
<feature type="strand" evidence="8">
    <location>
        <begin position="86"/>
        <end position="90"/>
    </location>
</feature>
<feature type="helix" evidence="8">
    <location>
        <begin position="96"/>
        <end position="114"/>
    </location>
</feature>
<feature type="strand" evidence="8">
    <location>
        <begin position="115"/>
        <end position="125"/>
    </location>
</feature>
<feature type="helix" evidence="8">
    <location>
        <begin position="131"/>
        <end position="139"/>
    </location>
</feature>
<feature type="strand" evidence="8">
    <location>
        <begin position="143"/>
        <end position="147"/>
    </location>
</feature>
<feature type="strand" evidence="8">
    <location>
        <begin position="169"/>
        <end position="175"/>
    </location>
</feature>
<feature type="strand" evidence="8">
    <location>
        <begin position="178"/>
        <end position="185"/>
    </location>
</feature>
<feature type="strand" evidence="8">
    <location>
        <begin position="187"/>
        <end position="190"/>
    </location>
</feature>
<feature type="helix" evidence="8">
    <location>
        <begin position="192"/>
        <end position="200"/>
    </location>
</feature>
<feature type="strand" evidence="8">
    <location>
        <begin position="209"/>
        <end position="211"/>
    </location>
</feature>
<feature type="helix" evidence="8">
    <location>
        <begin position="221"/>
        <end position="225"/>
    </location>
</feature>
<feature type="turn" evidence="8">
    <location>
        <begin position="233"/>
        <end position="235"/>
    </location>
</feature>
<feature type="helix" evidence="8">
    <location>
        <begin position="236"/>
        <end position="249"/>
    </location>
</feature>
<feature type="turn" evidence="8">
    <location>
        <begin position="250"/>
        <end position="253"/>
    </location>
</feature>
<feature type="strand" evidence="8">
    <location>
        <begin position="273"/>
        <end position="281"/>
    </location>
</feature>
<feature type="turn" evidence="8">
    <location>
        <begin position="283"/>
        <end position="286"/>
    </location>
</feature>
<feature type="helix" evidence="8">
    <location>
        <begin position="291"/>
        <end position="304"/>
    </location>
</feature>
<feature type="helix" evidence="8">
    <location>
        <begin position="313"/>
        <end position="325"/>
    </location>
</feature>
<feature type="strand" evidence="8">
    <location>
        <begin position="327"/>
        <end position="329"/>
    </location>
</feature>
<feature type="helix" evidence="8">
    <location>
        <begin position="331"/>
        <end position="340"/>
    </location>
</feature>
<evidence type="ECO:0000269" key="1">
    <source>
    </source>
</evidence>
<evidence type="ECO:0000303" key="2">
    <source>
    </source>
</evidence>
<evidence type="ECO:0000305" key="3"/>
<evidence type="ECO:0000305" key="4">
    <source>
    </source>
</evidence>
<evidence type="ECO:0000312" key="5">
    <source>
        <dbReference type="EMBL" id="KGK93380.1"/>
    </source>
</evidence>
<evidence type="ECO:0007744" key="6">
    <source>
        <dbReference type="PDB" id="2CWF"/>
    </source>
</evidence>
<evidence type="ECO:0007744" key="7">
    <source>
        <dbReference type="PDB" id="2CWH"/>
    </source>
</evidence>
<evidence type="ECO:0007829" key="8">
    <source>
        <dbReference type="PDB" id="1WTJ"/>
    </source>
</evidence>
<proteinExistence type="evidence at protein level"/>
<gene>
    <name evidence="2" type="primary">dpkA</name>
    <name evidence="5" type="ORF">NB04_21545</name>
</gene>
<sequence>MSASHADQPTQTVSYPQLIDLLRRIFVVHGTSPEVADVLAENCASAQRDGSHSHGIFRIPGYLSSLASGWVDGKAVPVVEDVGAAFVRVDACNGFAQPALAAARSLLIDKARSAGVAILAIRGSHHFAALWPDVEPFAEQGLVALSMVNSMTCVVPHGARQPLFGTNPIAFGAPRAGGEPIVFDLATSAIAHGDVQIAAREGRLLPAGMGVDRDGLPTQEPRAILDGGALLPFGGHKGSALSMMVELLAAGLTGGNFSFEFDWSKHPGAQTPWTGQLLIVIDPDKGAGQHFAQRSEELVRQLHGVGQERLPGDRRYLERARSMAHGIVIAQADLERLQELAGH</sequence>
<comment type="function">
    <text evidence="1">Catalyzes the reduction of both Delta(1)-pyrroline-2-carboxylate (Pyr2C) and Delta(1)-piperideine-2-carboxylate (Pip2C) to L-proline and L-pipecolate, respectively, using NADPH as the electron donor. Can catalyze the reverse oxidation reactions, albeit at a much lower rate. Is also able to catalyze in vitro the NADPH-dependent formation of N-methylalanine from pyruvate and N-methylamine; can act on other alpha-keto acids and specifically uses methylamine and not ammonia for these reductive amination reactions. Can use NADH instead of NADPH, although with much less efficiency.</text>
</comment>
<comment type="catalytic activity">
    <reaction evidence="1">
        <text>L-pipecolate + NADP(+) = Delta(1)-piperideine-2-carboxylate + NADPH + H(+)</text>
        <dbReference type="Rhea" id="RHEA:12524"/>
        <dbReference type="ChEBI" id="CHEBI:15378"/>
        <dbReference type="ChEBI" id="CHEBI:57783"/>
        <dbReference type="ChEBI" id="CHEBI:58349"/>
        <dbReference type="ChEBI" id="CHEBI:61185"/>
        <dbReference type="ChEBI" id="CHEBI:77631"/>
        <dbReference type="EC" id="1.5.1.21"/>
    </reaction>
</comment>
<comment type="catalytic activity">
    <reaction evidence="1">
        <text>L-proline + NADP(+) = 1-pyrroline-2-carboxylate + NADPH + H(+)</text>
        <dbReference type="Rhea" id="RHEA:20317"/>
        <dbReference type="ChEBI" id="CHEBI:15378"/>
        <dbReference type="ChEBI" id="CHEBI:39785"/>
        <dbReference type="ChEBI" id="CHEBI:57783"/>
        <dbReference type="ChEBI" id="CHEBI:58349"/>
        <dbReference type="ChEBI" id="CHEBI:60039"/>
        <dbReference type="EC" id="1.5.1.21"/>
    </reaction>
</comment>
<comment type="catalytic activity">
    <reaction evidence="1">
        <text>N-methyl-L-alanine + NADP(+) + H2O = methylamine + pyruvate + NADPH + H(+)</text>
        <dbReference type="Rhea" id="RHEA:21768"/>
        <dbReference type="ChEBI" id="CHEBI:15361"/>
        <dbReference type="ChEBI" id="CHEBI:15377"/>
        <dbReference type="ChEBI" id="CHEBI:15378"/>
        <dbReference type="ChEBI" id="CHEBI:57783"/>
        <dbReference type="ChEBI" id="CHEBI:58175"/>
        <dbReference type="ChEBI" id="CHEBI:58349"/>
        <dbReference type="ChEBI" id="CHEBI:59338"/>
        <dbReference type="EC" id="1.4.1.17"/>
    </reaction>
</comment>
<comment type="activity regulation">
    <text evidence="1">Is inhibited by the substrate analog pyrrole-2-carboxylate, and by 2-picolinate.</text>
</comment>
<comment type="biophysicochemical properties">
    <temperatureDependence>
        <text evidence="1">Optimum temperature is 30-45 degrees Celsius. Is stable between 0 and 35 degrees Celsius after incubation of 30 minutes.</text>
    </temperatureDependence>
</comment>
<comment type="subunit">
    <text evidence="1">Homodimer.</text>
</comment>
<comment type="similarity">
    <text evidence="3">Belongs to the LDH2/MDH2 oxidoreductase family.</text>
</comment>
<name>PY2CR_PSEUB</name>
<organism>
    <name type="scientific">Pseudomonas syringae pv. tomato</name>
    <dbReference type="NCBI Taxonomy" id="323"/>
    <lineage>
        <taxon>Bacteria</taxon>
        <taxon>Pseudomonadati</taxon>
        <taxon>Pseudomonadota</taxon>
        <taxon>Gammaproteobacteria</taxon>
        <taxon>Pseudomonadales</taxon>
        <taxon>Pseudomonadaceae</taxon>
        <taxon>Pseudomonas</taxon>
    </lineage>
</organism>
<keyword id="KW-0002">3D-structure</keyword>
<keyword id="KW-0521">NADP</keyword>
<keyword id="KW-0547">Nucleotide-binding</keyword>
<keyword id="KW-0560">Oxidoreductase</keyword>